<protein>
    <recommendedName>
        <fullName evidence="1">Polymerase basic protein 2</fullName>
    </recommendedName>
    <alternativeName>
        <fullName evidence="1">RNA-directed RNA polymerase subunit P3</fullName>
    </alternativeName>
</protein>
<keyword id="KW-1157">Cap snatching</keyword>
<keyword id="KW-1262">Eukaryotic host gene expression shutoff by virus</keyword>
<keyword id="KW-1191">Eukaryotic host transcription shutoff by virus</keyword>
<keyword id="KW-1190">Host gene expression shutoff by virus</keyword>
<keyword id="KW-1048">Host nucleus</keyword>
<keyword id="KW-0945">Host-virus interaction</keyword>
<keyword id="KW-1104">Inhibition of host RNA polymerase II by virus</keyword>
<keyword id="KW-0506">mRNA capping</keyword>
<keyword id="KW-0507">mRNA processing</keyword>
<keyword id="KW-1195">Viral transcription</keyword>
<keyword id="KW-0946">Virion</keyword>
<gene>
    <name evidence="1" type="primary">PB2</name>
</gene>
<organismHost>
    <name type="scientific">Aves</name>
    <dbReference type="NCBI Taxonomy" id="8782"/>
</organismHost>
<organismHost>
    <name type="scientific">Felis catus</name>
    <name type="common">Cat</name>
    <name type="synonym">Felis silvestris catus</name>
    <dbReference type="NCBI Taxonomy" id="9685"/>
</organismHost>
<organismHost>
    <name type="scientific">Homo sapiens</name>
    <name type="common">Human</name>
    <dbReference type="NCBI Taxonomy" id="9606"/>
</organismHost>
<organismHost>
    <name type="scientific">Panthera pardus</name>
    <name type="common">Leopard</name>
    <name type="synonym">Felis pardus</name>
    <dbReference type="NCBI Taxonomy" id="9691"/>
</organismHost>
<organismHost>
    <name type="scientific">Panthera tigris</name>
    <name type="common">Tiger</name>
    <dbReference type="NCBI Taxonomy" id="9694"/>
</organismHost>
<organismHost>
    <name type="scientific">Sus scrofa</name>
    <name type="common">Pig</name>
    <dbReference type="NCBI Taxonomy" id="9823"/>
</organismHost>
<comment type="function">
    <text evidence="1">Plays an essential role in transcription initiation and cap-stealing mechanism, in which cellular capped pre-mRNAs are used to generate primers for viral transcription. Recognizes and binds the 7-methylguanosine-containing cap of the target pre-RNA which is subsequently cleaved after 10-13 nucleotides by the viral protein PA. Plays a role in the initiation of the viral genome replication and modulates the activity of the ribonucleoprotein (RNP) complex.</text>
</comment>
<comment type="subunit">
    <text evidence="1">Influenza RNA polymerase is composed of three subunits: PB1, PB2 and PA. Interacts (via N-terminus) with PB1 (via C-terminus). Interacts with nucleoprotein NP (via N-terminus).</text>
</comment>
<comment type="interaction">
    <interactant intactId="EBI-7674009">
        <id>Q8QPG7</id>
    </interactant>
    <interactant intactId="EBI-7673978">
        <id>P0C5U5</id>
        <label>PB1</label>
    </interactant>
    <organismsDiffer>false</organismsDiffer>
    <experiments>4</experiments>
</comment>
<comment type="subcellular location">
    <subcellularLocation>
        <location evidence="1">Virion</location>
    </subcellularLocation>
    <subcellularLocation>
        <location evidence="1">Host nucleus</location>
    </subcellularLocation>
</comment>
<comment type="similarity">
    <text evidence="1">Belongs to the influenza viruses PB2 family.</text>
</comment>
<organism>
    <name type="scientific">Influenza A virus (strain A/Duck/Hong Kong/2986.1/2000 H5N1 genotype C)</name>
    <dbReference type="NCBI Taxonomy" id="176674"/>
    <lineage>
        <taxon>Viruses</taxon>
        <taxon>Riboviria</taxon>
        <taxon>Orthornavirae</taxon>
        <taxon>Negarnaviricota</taxon>
        <taxon>Polyploviricotina</taxon>
        <taxon>Insthoviricetes</taxon>
        <taxon>Articulavirales</taxon>
        <taxon>Orthomyxoviridae</taxon>
        <taxon>Alphainfluenzavirus</taxon>
        <taxon>Alphainfluenzavirus influenzae</taxon>
        <taxon>Influenza A virus</taxon>
    </lineage>
</organism>
<dbReference type="EMBL" id="AY059525">
    <property type="protein sequence ID" value="AAL31431.1"/>
    <property type="molecule type" value="Genomic_RNA"/>
</dbReference>
<dbReference type="SMR" id="Q8QPG7"/>
<dbReference type="IntAct" id="Q8QPG7">
    <property type="interactions" value="2"/>
</dbReference>
<dbReference type="MINT" id="Q8QPG7"/>
<dbReference type="PRO" id="PR:Q8QPG7"/>
<dbReference type="Proteomes" id="UP000008285">
    <property type="component" value="Genome"/>
</dbReference>
<dbReference type="GO" id="GO:0042025">
    <property type="term" value="C:host cell nucleus"/>
    <property type="evidence" value="ECO:0007669"/>
    <property type="project" value="UniProtKB-SubCell"/>
</dbReference>
<dbReference type="GO" id="GO:0044423">
    <property type="term" value="C:virion component"/>
    <property type="evidence" value="ECO:0007669"/>
    <property type="project" value="UniProtKB-UniRule"/>
</dbReference>
<dbReference type="GO" id="GO:0003723">
    <property type="term" value="F:RNA binding"/>
    <property type="evidence" value="ECO:0007669"/>
    <property type="project" value="UniProtKB-UniRule"/>
</dbReference>
<dbReference type="GO" id="GO:0003968">
    <property type="term" value="F:RNA-directed RNA polymerase activity"/>
    <property type="evidence" value="ECO:0007669"/>
    <property type="project" value="UniProtKB-UniRule"/>
</dbReference>
<dbReference type="GO" id="GO:0006370">
    <property type="term" value="P:7-methylguanosine mRNA capping"/>
    <property type="evidence" value="ECO:0007669"/>
    <property type="project" value="UniProtKB-UniRule"/>
</dbReference>
<dbReference type="GO" id="GO:0075526">
    <property type="term" value="P:cap snatching"/>
    <property type="evidence" value="ECO:0007669"/>
    <property type="project" value="UniProtKB-UniRule"/>
</dbReference>
<dbReference type="GO" id="GO:0006351">
    <property type="term" value="P:DNA-templated transcription"/>
    <property type="evidence" value="ECO:0007669"/>
    <property type="project" value="UniProtKB-UniRule"/>
</dbReference>
<dbReference type="GO" id="GO:0039657">
    <property type="term" value="P:symbiont-mediated suppression of host gene expression"/>
    <property type="evidence" value="ECO:0007669"/>
    <property type="project" value="UniProtKB-KW"/>
</dbReference>
<dbReference type="GO" id="GO:0039523">
    <property type="term" value="P:symbiont-mediated suppression of host mRNA transcription via inhibition of RNA polymerase II activity"/>
    <property type="evidence" value="ECO:0007669"/>
    <property type="project" value="UniProtKB-UniRule"/>
</dbReference>
<dbReference type="GO" id="GO:0039694">
    <property type="term" value="P:viral RNA genome replication"/>
    <property type="evidence" value="ECO:0007669"/>
    <property type="project" value="InterPro"/>
</dbReference>
<dbReference type="FunFam" id="3.30.30.90:FF:000001">
    <property type="entry name" value="Polymerase basic protein 2"/>
    <property type="match status" value="1"/>
</dbReference>
<dbReference type="Gene3D" id="3.30.30.90">
    <property type="entry name" value="Polymerase Basic Protein 2, C-terminal domain"/>
    <property type="match status" value="1"/>
</dbReference>
<dbReference type="HAMAP" id="MF_04062">
    <property type="entry name" value="INV_PB2"/>
    <property type="match status" value="1"/>
</dbReference>
<dbReference type="InterPro" id="IPR049110">
    <property type="entry name" value="Flu_PB2_2nd"/>
</dbReference>
<dbReference type="InterPro" id="IPR049114">
    <property type="entry name" value="Flu_PB2_6th"/>
</dbReference>
<dbReference type="InterPro" id="IPR049115">
    <property type="entry name" value="Flu_PB2_C"/>
</dbReference>
<dbReference type="InterPro" id="IPR048298">
    <property type="entry name" value="Flu_PB2_CAP-bd"/>
</dbReference>
<dbReference type="InterPro" id="IPR049111">
    <property type="entry name" value="Flu_PB2_middle"/>
</dbReference>
<dbReference type="InterPro" id="IPR049106">
    <property type="entry name" value="Flu_PB2_N"/>
</dbReference>
<dbReference type="InterPro" id="IPR001591">
    <property type="entry name" value="INV_PB2"/>
</dbReference>
<dbReference type="InterPro" id="IPR049113">
    <property type="entry name" value="PB2_helical"/>
</dbReference>
<dbReference type="InterPro" id="IPR037258">
    <property type="entry name" value="PDB2_C"/>
</dbReference>
<dbReference type="Pfam" id="PF20947">
    <property type="entry name" value="Flu_PB2_1st"/>
    <property type="match status" value="1"/>
</dbReference>
<dbReference type="Pfam" id="PF20948">
    <property type="entry name" value="Flu_PB2_2nd"/>
    <property type="match status" value="1"/>
</dbReference>
<dbReference type="Pfam" id="PF20949">
    <property type="entry name" value="Flu_PB2_3rd"/>
    <property type="match status" value="1"/>
</dbReference>
<dbReference type="Pfam" id="PF20950">
    <property type="entry name" value="Flu_PB2_4th"/>
    <property type="match status" value="1"/>
</dbReference>
<dbReference type="Pfam" id="PF00604">
    <property type="entry name" value="Flu_PB2_5th"/>
    <property type="match status" value="1"/>
</dbReference>
<dbReference type="Pfam" id="PF20951">
    <property type="entry name" value="Flu_PB2_6th"/>
    <property type="match status" value="1"/>
</dbReference>
<dbReference type="Pfam" id="PF20952">
    <property type="entry name" value="Flu_PB2_7th"/>
    <property type="match status" value="1"/>
</dbReference>
<dbReference type="SUPFAM" id="SSF160453">
    <property type="entry name" value="PB2 C-terminal domain-like"/>
    <property type="match status" value="1"/>
</dbReference>
<name>PB2_I00A0</name>
<sequence>MERIKELRDLMSQSRTREILTKTTVDHMAIIKKYTSGRQEKNPALRMKWMMAMKYPITADKRIIEMIPERNEQGQTLWSKTNDAGSDRVMVSPLAVTWWNRNGPTTSAVYYPKVYKTYFEKVERLKHGTFGPVHFRNQIKIRRRVDINPGHADLNAKEAQDVIMEVVFPNEVGARILTSESQLTITKEKKEELQDCKIAPLMVAYMLERELVRKTRFLPVAGGTSSVYIEVLHLTQGTCWEQMYTPGGEVRNDDVIQSMIIAARNIVRRATVSADPLASLLEMCHSTQIGGIRMVDILRQNPTEEQAVDICKAAMGLRISSSFSFGGFTFKRTSGTSVKKEEEVLTGNLQTLKIRVHEGYEEFTMVGRRATAILRKATRRLIQLIVSGRDEQSIAEAIIVAMVFSQEDCMIKAVRGDLNFVNRANQRLNPMHQLLRHFQKDAKVLFQNWGIEPIDNVMGMIGILPDMTPSTEMSLRGVRVSKMGVDEYSSTERVVVSIDRFLRVRDQRGNVLLSPEEVSETQGTEKLAITYSSSMMWEINGPESVLVNTYQWIIRNWETVKIQWSQDPTMLYNKMEFEPFQSLVPKAARGQYSGFVRTLFQQMRDVLGTFDTVQIIKLLPFAAAPPEQSRMQFSSLTVNVRGSGMRILVRGNSPVFNYNKATKRLTVLGKDAGALTEDPDEGTAGVESAVLRGFLILGKEDKRYGPALSINELSNLAKGEKANVLIGQGDVVLVMKRKRDSSILTDSQTATKRIRMAIN</sequence>
<reference key="1">
    <citation type="journal article" date="2002" name="Virology">
        <title>H5N1 influenza viruses isolated from geese in Southeastern China: evidence for genetic reassortment and interspecies transmission to ducks.</title>
        <authorList>
            <person name="Guan Y."/>
            <person name="Peiris M."/>
            <person name="Kong K.F."/>
            <person name="Dyrting K.C."/>
            <person name="Ellis T.M."/>
            <person name="Sit T."/>
            <person name="Zhang L.J."/>
            <person name="Shortridge K.F."/>
        </authorList>
    </citation>
    <scope>NUCLEOTIDE SEQUENCE [GENOMIC RNA]</scope>
</reference>
<evidence type="ECO:0000255" key="1">
    <source>
        <dbReference type="HAMAP-Rule" id="MF_04062"/>
    </source>
</evidence>
<accession>Q8QPG7</accession>
<feature type="chain" id="PRO_0000311143" description="Polymerase basic protein 2">
    <location>
        <begin position="1"/>
        <end position="759"/>
    </location>
</feature>
<feature type="short sequence motif" description="Nuclear localization signal" evidence="1">
    <location>
        <begin position="736"/>
        <end position="739"/>
    </location>
</feature>
<feature type="site" description="Avian adaptation" evidence="1">
    <location>
        <position position="627"/>
    </location>
</feature>
<proteinExistence type="evidence at protein level"/>